<protein>
    <recommendedName>
        <fullName evidence="1">Lipid A acyltransferase PagP</fullName>
        <ecNumber evidence="1">2.3.1.251</ecNumber>
    </recommendedName>
    <alternativeName>
        <fullName evidence="1">Lipid A acylation protein</fullName>
    </alternativeName>
</protein>
<organism>
    <name type="scientific">Legionella pneumophila (strain Corby)</name>
    <dbReference type="NCBI Taxonomy" id="400673"/>
    <lineage>
        <taxon>Bacteria</taxon>
        <taxon>Pseudomonadati</taxon>
        <taxon>Pseudomonadota</taxon>
        <taxon>Gammaproteobacteria</taxon>
        <taxon>Legionellales</taxon>
        <taxon>Legionellaceae</taxon>
        <taxon>Legionella</taxon>
    </lineage>
</organism>
<proteinExistence type="inferred from homology"/>
<feature type="signal peptide" evidence="1">
    <location>
        <begin position="1"/>
        <end position="18"/>
    </location>
</feature>
<feature type="chain" id="PRO_0000414459" description="Lipid A acyltransferase PagP">
    <location>
        <begin position="19"/>
        <end position="190"/>
    </location>
</feature>
<feature type="active site" evidence="1">
    <location>
        <position position="60"/>
    </location>
</feature>
<feature type="active site" evidence="1">
    <location>
        <position position="103"/>
    </location>
</feature>
<feature type="active site" evidence="1">
    <location>
        <position position="104"/>
    </location>
</feature>
<feature type="site" description="Role in lipopolysaccharide recognition" evidence="1">
    <location>
        <position position="69"/>
    </location>
</feature>
<reference key="1">
    <citation type="submission" date="2006-11" db="EMBL/GenBank/DDBJ databases">
        <title>Identification and characterization of a new conjugation/ type IVA secretion system (trb/tra) of L. pneumophila Corby localized on a mobile genomic island.</title>
        <authorList>
            <person name="Gloeckner G."/>
            <person name="Albert-Weissenberger C."/>
            <person name="Weinmann E."/>
            <person name="Jacobi S."/>
            <person name="Schunder E."/>
            <person name="Steinert M."/>
            <person name="Buchrieser C."/>
            <person name="Hacker J."/>
            <person name="Heuner K."/>
        </authorList>
    </citation>
    <scope>NUCLEOTIDE SEQUENCE [LARGE SCALE GENOMIC DNA]</scope>
    <source>
        <strain>Corby</strain>
    </source>
</reference>
<sequence>MKRLISCLTIICALNASAAAETTSNPCSRWISFLKPVCQRIHQTWAEGHDDMYFSGYAWHNRYVYSNEKIKSYNETAWGGGLGKSLFDEKGNWHGLYAIAFLDSHRHFEPAVGYAYLKTASVNKDLKAGLGYSVLVTSRVDYDNVPIPGALPWAALFYKRITIAATYIPGSSREGHENGNVLYMLGKISL</sequence>
<gene>
    <name evidence="1" type="primary">pagP</name>
    <name type="ordered locus">LPC_0026</name>
</gene>
<name>PAGP_LEGPC</name>
<accession>A5I9H6</accession>
<comment type="function">
    <text evidence="1">Transfers a fatty acid residue from the sn-1 position of a phospholipid to the N-linked hydroxyfatty acid chain on the proximal unit of lipid A or its precursors.</text>
</comment>
<comment type="catalytic activity">
    <reaction evidence="1">
        <text>a lipid A + a 1,2-diacyl-sn-glycero-3-phosphocholine = a hepta-acyl lipid A + a 2-acyl-sn-glycero-3-phosphocholine</text>
        <dbReference type="Rhea" id="RHEA:74275"/>
        <dbReference type="ChEBI" id="CHEBI:57643"/>
        <dbReference type="ChEBI" id="CHEBI:57875"/>
        <dbReference type="ChEBI" id="CHEBI:193141"/>
        <dbReference type="ChEBI" id="CHEBI:193142"/>
        <dbReference type="EC" id="2.3.1.251"/>
    </reaction>
</comment>
<comment type="catalytic activity">
    <reaction evidence="1">
        <text>a lipid IVA + a 1,2-diacyl-sn-glycero-3-phosphocholine = a lipid IVB + a 2-acyl-sn-glycero-3-phosphocholine</text>
        <dbReference type="Rhea" id="RHEA:74279"/>
        <dbReference type="ChEBI" id="CHEBI:57643"/>
        <dbReference type="ChEBI" id="CHEBI:57875"/>
        <dbReference type="ChEBI" id="CHEBI:176425"/>
        <dbReference type="ChEBI" id="CHEBI:193143"/>
        <dbReference type="EC" id="2.3.1.251"/>
    </reaction>
</comment>
<comment type="catalytic activity">
    <reaction evidence="1">
        <text>a lipid IIA + a 1,2-diacyl-sn-glycero-3-phosphocholine = a lipid IIB + a 2-acyl-sn-glycero-3-phosphocholine</text>
        <dbReference type="Rhea" id="RHEA:74283"/>
        <dbReference type="ChEBI" id="CHEBI:57643"/>
        <dbReference type="ChEBI" id="CHEBI:57875"/>
        <dbReference type="ChEBI" id="CHEBI:193144"/>
        <dbReference type="ChEBI" id="CHEBI:193145"/>
        <dbReference type="EC" id="2.3.1.251"/>
    </reaction>
</comment>
<comment type="subunit">
    <text evidence="1">Homodimer.</text>
</comment>
<comment type="subcellular location">
    <subcellularLocation>
        <location evidence="1">Cell outer membrane</location>
    </subcellularLocation>
</comment>
<comment type="similarity">
    <text evidence="1">Belongs to the lipid A palmitoyltransferase family.</text>
</comment>
<dbReference type="EC" id="2.3.1.251" evidence="1"/>
<dbReference type="EMBL" id="CP000675">
    <property type="protein sequence ID" value="ABQ54026.1"/>
    <property type="molecule type" value="Genomic_DNA"/>
</dbReference>
<dbReference type="RefSeq" id="WP_011945216.1">
    <property type="nucleotide sequence ID" value="NC_009494.2"/>
</dbReference>
<dbReference type="SMR" id="A5I9H6"/>
<dbReference type="KEGG" id="lpc:LPC_0026"/>
<dbReference type="HOGENOM" id="CLU_104099_0_0_6"/>
<dbReference type="GO" id="GO:0009279">
    <property type="term" value="C:cell outer membrane"/>
    <property type="evidence" value="ECO:0007669"/>
    <property type="project" value="UniProtKB-SubCell"/>
</dbReference>
<dbReference type="GO" id="GO:0016746">
    <property type="term" value="F:acyltransferase activity"/>
    <property type="evidence" value="ECO:0007669"/>
    <property type="project" value="UniProtKB-UniRule"/>
</dbReference>
<dbReference type="GO" id="GO:0009245">
    <property type="term" value="P:lipid A biosynthetic process"/>
    <property type="evidence" value="ECO:0007669"/>
    <property type="project" value="UniProtKB-UniRule"/>
</dbReference>
<dbReference type="Gene3D" id="2.40.160.20">
    <property type="match status" value="1"/>
</dbReference>
<dbReference type="HAMAP" id="MF_00837">
    <property type="entry name" value="PagP_transferase"/>
    <property type="match status" value="1"/>
</dbReference>
<dbReference type="InterPro" id="IPR009746">
    <property type="entry name" value="LipidA_acyl_PagP"/>
</dbReference>
<dbReference type="InterPro" id="IPR011250">
    <property type="entry name" value="OMP/PagP_b-brl"/>
</dbReference>
<dbReference type="NCBIfam" id="NF008271">
    <property type="entry name" value="PRK11045.1"/>
    <property type="match status" value="1"/>
</dbReference>
<dbReference type="Pfam" id="PF07017">
    <property type="entry name" value="PagP"/>
    <property type="match status" value="1"/>
</dbReference>
<dbReference type="SUPFAM" id="SSF56925">
    <property type="entry name" value="OMPA-like"/>
    <property type="match status" value="1"/>
</dbReference>
<keyword id="KW-0012">Acyltransferase</keyword>
<keyword id="KW-0998">Cell outer membrane</keyword>
<keyword id="KW-0472">Membrane</keyword>
<keyword id="KW-0732">Signal</keyword>
<keyword id="KW-0808">Transferase</keyword>
<evidence type="ECO:0000255" key="1">
    <source>
        <dbReference type="HAMAP-Rule" id="MF_00837"/>
    </source>
</evidence>